<protein>
    <recommendedName>
        <fullName>Mitogen-activated protein kinase homolog NTF4</fullName>
        <ecNumber>2.7.11.24</ecNumber>
    </recommendedName>
    <alternativeName>
        <fullName>P45</fullName>
    </alternativeName>
</protein>
<comment type="catalytic activity">
    <reaction>
        <text>L-seryl-[protein] + ATP = O-phospho-L-seryl-[protein] + ADP + H(+)</text>
        <dbReference type="Rhea" id="RHEA:17989"/>
        <dbReference type="Rhea" id="RHEA-COMP:9863"/>
        <dbReference type="Rhea" id="RHEA-COMP:11604"/>
        <dbReference type="ChEBI" id="CHEBI:15378"/>
        <dbReference type="ChEBI" id="CHEBI:29999"/>
        <dbReference type="ChEBI" id="CHEBI:30616"/>
        <dbReference type="ChEBI" id="CHEBI:83421"/>
        <dbReference type="ChEBI" id="CHEBI:456216"/>
        <dbReference type="EC" id="2.7.11.24"/>
    </reaction>
</comment>
<comment type="catalytic activity">
    <reaction>
        <text>L-threonyl-[protein] + ATP = O-phospho-L-threonyl-[protein] + ADP + H(+)</text>
        <dbReference type="Rhea" id="RHEA:46608"/>
        <dbReference type="Rhea" id="RHEA-COMP:11060"/>
        <dbReference type="Rhea" id="RHEA-COMP:11605"/>
        <dbReference type="ChEBI" id="CHEBI:15378"/>
        <dbReference type="ChEBI" id="CHEBI:30013"/>
        <dbReference type="ChEBI" id="CHEBI:30616"/>
        <dbReference type="ChEBI" id="CHEBI:61977"/>
        <dbReference type="ChEBI" id="CHEBI:456216"/>
        <dbReference type="EC" id="2.7.11.24"/>
    </reaction>
</comment>
<comment type="cofactor">
    <cofactor evidence="1">
        <name>Mg(2+)</name>
        <dbReference type="ChEBI" id="CHEBI:18420"/>
    </cofactor>
</comment>
<comment type="activity regulation">
    <text evidence="1">Activated by tyrosine and threonine phosphorylation.</text>
</comment>
<comment type="domain">
    <text>The TXY motif contains the threonine and tyrosine residues whose phosphorylation activates the MAP kinases.</text>
</comment>
<comment type="PTM">
    <text evidence="1">Dually phosphorylated on Thr-218 and Tyr-220, which activates the enzyme (By similarity). Very low autophosphorylation, although dramatically increased when Mn(2+) is added to the reaction instead of Mg(2+).</text>
</comment>
<comment type="similarity">
    <text evidence="5">Belongs to the protein kinase superfamily. CMGC Ser/Thr protein kinase family. MAP kinase subfamily.</text>
</comment>
<organism>
    <name type="scientific">Nicotiana tabacum</name>
    <name type="common">Common tobacco</name>
    <dbReference type="NCBI Taxonomy" id="4097"/>
    <lineage>
        <taxon>Eukaryota</taxon>
        <taxon>Viridiplantae</taxon>
        <taxon>Streptophyta</taxon>
        <taxon>Embryophyta</taxon>
        <taxon>Tracheophyta</taxon>
        <taxon>Spermatophyta</taxon>
        <taxon>Magnoliopsida</taxon>
        <taxon>eudicotyledons</taxon>
        <taxon>Gunneridae</taxon>
        <taxon>Pentapetalae</taxon>
        <taxon>asterids</taxon>
        <taxon>lamiids</taxon>
        <taxon>Solanales</taxon>
        <taxon>Solanaceae</taxon>
        <taxon>Nicotianoideae</taxon>
        <taxon>Nicotianeae</taxon>
        <taxon>Nicotiana</taxon>
    </lineage>
</organism>
<proteinExistence type="evidence at transcript level"/>
<keyword id="KW-0067">ATP-binding</keyword>
<keyword id="KW-0418">Kinase</keyword>
<keyword id="KW-0547">Nucleotide-binding</keyword>
<keyword id="KW-0597">Phosphoprotein</keyword>
<keyword id="KW-1185">Reference proteome</keyword>
<keyword id="KW-0723">Serine/threonine-protein kinase</keyword>
<keyword id="KW-0808">Transferase</keyword>
<sequence>MDGPAHQTDTVMSDAAGQQPAPPSQPVAGIDNIPATLSHGGRFIQYNIFGNIFEVTAKYKPPIMPIGKGAYGIVCSALNSETNEHVAIKKIANAFDNKIDAKRTLREIKLLRHMDHENIVAIRDIIPPPQREAFNDVYIAYELMDTDLHQIIRSNQGLSEEHCQYFLYQILRGLKYIHSANVLHRDLKPSNLLLNANCDLKICDFGLARVTSETDFMTEYVVTRWYRAPELLLNSSDYTAAIDVWSVGCIFMELMDRKPLFPGRDHVHQLRLLMELIGTPSEAEMEFLNENAKRYIRQLPLYRRQSFVEKFPHVNPAAIDLVEKMLTFDPRRRITVEDALAHPYLTSLHDISDEPVCMTPFNFDFEQHALTEEQMKELIYREGLAFNPEYQHM</sequence>
<accession>Q40532</accession>
<reference key="1">
    <citation type="journal article" date="1995" name="Eur. J. Biochem.">
        <title>Molecular cloning, functional expression in Escherichia coli, and characterization of multiple mitogen-activated-protein kinases from tobacco.</title>
        <authorList>
            <person name="Wilson C."/>
            <person name="Anglmayer R."/>
            <person name="Vicente O."/>
            <person name="Heberle-Bors E."/>
        </authorList>
    </citation>
    <scope>NUCLEOTIDE SEQUENCE [MRNA]</scope>
    <source>
        <strain>cv. Petit Havana SR1</strain>
    </source>
</reference>
<name>NTF4_TOBAC</name>
<feature type="chain" id="PRO_0000186322" description="Mitogen-activated protein kinase homolog NTF4">
    <location>
        <begin position="1"/>
        <end position="393"/>
    </location>
</feature>
<feature type="domain" description="Protein kinase" evidence="2">
    <location>
        <begin position="60"/>
        <end position="345"/>
    </location>
</feature>
<feature type="region of interest" description="Disordered" evidence="4">
    <location>
        <begin position="1"/>
        <end position="32"/>
    </location>
</feature>
<feature type="short sequence motif" description="TXY">
    <location>
        <begin position="218"/>
        <end position="220"/>
    </location>
</feature>
<feature type="active site" description="Proton acceptor" evidence="2 3">
    <location>
        <position position="186"/>
    </location>
</feature>
<feature type="binding site" evidence="2">
    <location>
        <begin position="66"/>
        <end position="74"/>
    </location>
    <ligand>
        <name>ATP</name>
        <dbReference type="ChEBI" id="CHEBI:30616"/>
    </ligand>
</feature>
<feature type="binding site" evidence="2">
    <location>
        <position position="89"/>
    </location>
    <ligand>
        <name>ATP</name>
        <dbReference type="ChEBI" id="CHEBI:30616"/>
    </ligand>
</feature>
<feature type="modified residue" description="Phosphothreonine" evidence="1">
    <location>
        <position position="218"/>
    </location>
</feature>
<feature type="modified residue" description="Phosphotyrosine" evidence="1">
    <location>
        <position position="220"/>
    </location>
</feature>
<evidence type="ECO:0000250" key="1"/>
<evidence type="ECO:0000255" key="2">
    <source>
        <dbReference type="PROSITE-ProRule" id="PRU00159"/>
    </source>
</evidence>
<evidence type="ECO:0000255" key="3">
    <source>
        <dbReference type="PROSITE-ProRule" id="PRU10027"/>
    </source>
</evidence>
<evidence type="ECO:0000256" key="4">
    <source>
        <dbReference type="SAM" id="MobiDB-lite"/>
    </source>
</evidence>
<evidence type="ECO:0000305" key="5"/>
<dbReference type="EC" id="2.7.11.24"/>
<dbReference type="EMBL" id="X83880">
    <property type="protein sequence ID" value="CAA58761.1"/>
    <property type="molecule type" value="mRNA"/>
</dbReference>
<dbReference type="PIR" id="S68190">
    <property type="entry name" value="S51321"/>
</dbReference>
<dbReference type="SMR" id="Q40532"/>
<dbReference type="STRING" id="4097.Q40532"/>
<dbReference type="PaxDb" id="4097-Q40532"/>
<dbReference type="BRENDA" id="2.7.11.24">
    <property type="organism ID" value="3645"/>
</dbReference>
<dbReference type="Proteomes" id="UP000084051">
    <property type="component" value="Unplaced"/>
</dbReference>
<dbReference type="GO" id="GO:0005737">
    <property type="term" value="C:cytoplasm"/>
    <property type="evidence" value="ECO:0000318"/>
    <property type="project" value="GO_Central"/>
</dbReference>
<dbReference type="GO" id="GO:0005634">
    <property type="term" value="C:nucleus"/>
    <property type="evidence" value="ECO:0000318"/>
    <property type="project" value="GO_Central"/>
</dbReference>
<dbReference type="GO" id="GO:0005524">
    <property type="term" value="F:ATP binding"/>
    <property type="evidence" value="ECO:0007669"/>
    <property type="project" value="UniProtKB-KW"/>
</dbReference>
<dbReference type="GO" id="GO:0004707">
    <property type="term" value="F:MAP kinase activity"/>
    <property type="evidence" value="ECO:0007669"/>
    <property type="project" value="UniProtKB-EC"/>
</dbReference>
<dbReference type="GO" id="GO:0106310">
    <property type="term" value="F:protein serine kinase activity"/>
    <property type="evidence" value="ECO:0007669"/>
    <property type="project" value="RHEA"/>
</dbReference>
<dbReference type="GO" id="GO:0004674">
    <property type="term" value="F:protein serine/threonine kinase activity"/>
    <property type="evidence" value="ECO:0000318"/>
    <property type="project" value="GO_Central"/>
</dbReference>
<dbReference type="GO" id="GO:0035556">
    <property type="term" value="P:intracellular signal transduction"/>
    <property type="evidence" value="ECO:0000318"/>
    <property type="project" value="GO_Central"/>
</dbReference>
<dbReference type="CDD" id="cd07858">
    <property type="entry name" value="STKc_TEY_MAPK"/>
    <property type="match status" value="1"/>
</dbReference>
<dbReference type="FunFam" id="1.10.510.10:FF:000013">
    <property type="entry name" value="Mitogen-activated protein kinase"/>
    <property type="match status" value="1"/>
</dbReference>
<dbReference type="FunFam" id="3.30.200.20:FF:000046">
    <property type="entry name" value="Mitogen-activated protein kinase"/>
    <property type="match status" value="1"/>
</dbReference>
<dbReference type="Gene3D" id="3.30.200.20">
    <property type="entry name" value="Phosphorylase Kinase, domain 1"/>
    <property type="match status" value="1"/>
</dbReference>
<dbReference type="Gene3D" id="1.10.510.10">
    <property type="entry name" value="Transferase(Phosphotransferase) domain 1"/>
    <property type="match status" value="1"/>
</dbReference>
<dbReference type="InterPro" id="IPR011009">
    <property type="entry name" value="Kinase-like_dom_sf"/>
</dbReference>
<dbReference type="InterPro" id="IPR050117">
    <property type="entry name" value="MAP_kinase"/>
</dbReference>
<dbReference type="InterPro" id="IPR003527">
    <property type="entry name" value="MAP_kinase_CS"/>
</dbReference>
<dbReference type="InterPro" id="IPR000719">
    <property type="entry name" value="Prot_kinase_dom"/>
</dbReference>
<dbReference type="InterPro" id="IPR017441">
    <property type="entry name" value="Protein_kinase_ATP_BS"/>
</dbReference>
<dbReference type="InterPro" id="IPR008271">
    <property type="entry name" value="Ser/Thr_kinase_AS"/>
</dbReference>
<dbReference type="PANTHER" id="PTHR24055">
    <property type="entry name" value="MITOGEN-ACTIVATED PROTEIN KINASE"/>
    <property type="match status" value="1"/>
</dbReference>
<dbReference type="Pfam" id="PF00069">
    <property type="entry name" value="Pkinase"/>
    <property type="match status" value="1"/>
</dbReference>
<dbReference type="SMART" id="SM00220">
    <property type="entry name" value="S_TKc"/>
    <property type="match status" value="1"/>
</dbReference>
<dbReference type="SUPFAM" id="SSF56112">
    <property type="entry name" value="Protein kinase-like (PK-like)"/>
    <property type="match status" value="1"/>
</dbReference>
<dbReference type="PROSITE" id="PS01351">
    <property type="entry name" value="MAPK"/>
    <property type="match status" value="1"/>
</dbReference>
<dbReference type="PROSITE" id="PS00107">
    <property type="entry name" value="PROTEIN_KINASE_ATP"/>
    <property type="match status" value="1"/>
</dbReference>
<dbReference type="PROSITE" id="PS50011">
    <property type="entry name" value="PROTEIN_KINASE_DOM"/>
    <property type="match status" value="1"/>
</dbReference>
<dbReference type="PROSITE" id="PS00108">
    <property type="entry name" value="PROTEIN_KINASE_ST"/>
    <property type="match status" value="1"/>
</dbReference>
<gene>
    <name type="primary">NTF4</name>
</gene>